<comment type="function">
    <text evidence="1">Catalyzes the NADPH-dependent reduction of 7-cyano-7-deazaguanine (preQ0) to 7-aminomethyl-7-deazaguanine (preQ1).</text>
</comment>
<comment type="catalytic activity">
    <reaction evidence="1">
        <text>7-aminomethyl-7-carbaguanine + 2 NADP(+) = 7-cyano-7-deazaguanine + 2 NADPH + 3 H(+)</text>
        <dbReference type="Rhea" id="RHEA:13409"/>
        <dbReference type="ChEBI" id="CHEBI:15378"/>
        <dbReference type="ChEBI" id="CHEBI:45075"/>
        <dbReference type="ChEBI" id="CHEBI:57783"/>
        <dbReference type="ChEBI" id="CHEBI:58349"/>
        <dbReference type="ChEBI" id="CHEBI:58703"/>
        <dbReference type="EC" id="1.7.1.13"/>
    </reaction>
</comment>
<comment type="pathway">
    <text evidence="1">tRNA modification; tRNA-queuosine biosynthesis.</text>
</comment>
<comment type="subcellular location">
    <subcellularLocation>
        <location evidence="1">Cytoplasm</location>
    </subcellularLocation>
</comment>
<comment type="similarity">
    <text evidence="1">Belongs to the GTP cyclohydrolase I family. QueF type 1 subfamily.</text>
</comment>
<proteinExistence type="inferred from homology"/>
<name>QUEF_CAMLR</name>
<reference key="1">
    <citation type="journal article" date="2008" name="Foodborne Pathog. Dis.">
        <title>The complete genome sequence and analysis of the human pathogen Campylobacter lari.</title>
        <authorList>
            <person name="Miller W.G."/>
            <person name="Wang G."/>
            <person name="Binnewies T.T."/>
            <person name="Parker C.T."/>
        </authorList>
    </citation>
    <scope>NUCLEOTIDE SEQUENCE [LARGE SCALE GENOMIC DNA]</scope>
    <source>
        <strain>RM2100 / D67 / ATCC BAA-1060</strain>
    </source>
</reference>
<sequence>MRYGEKEIKEFDVENMEVWPNDAKNDYVIKITLPEFMCCCPRSGYPDFATIYLEYIPNKLVVELKAIKLYINTFMYRNVSHEASINEIYNTLKEKLDPKWIKVVGDFNPRGNVHTVIECRSDLVVPQ</sequence>
<feature type="chain" id="PRO_1000148669" description="NADPH-dependent 7-cyano-7-deazaguanine reductase">
    <location>
        <begin position="1"/>
        <end position="127"/>
    </location>
</feature>
<feature type="active site" description="Thioimide intermediate" evidence="1">
    <location>
        <position position="40"/>
    </location>
</feature>
<feature type="active site" description="Proton donor" evidence="1">
    <location>
        <position position="47"/>
    </location>
</feature>
<feature type="binding site" evidence="1">
    <location>
        <begin position="62"/>
        <end position="64"/>
    </location>
    <ligand>
        <name>substrate</name>
    </ligand>
</feature>
<feature type="binding site" evidence="1">
    <location>
        <begin position="81"/>
        <end position="82"/>
    </location>
    <ligand>
        <name>substrate</name>
    </ligand>
</feature>
<dbReference type="EC" id="1.7.1.13" evidence="1"/>
<dbReference type="EMBL" id="CP000932">
    <property type="protein sequence ID" value="ACM63374.1"/>
    <property type="molecule type" value="Genomic_DNA"/>
</dbReference>
<dbReference type="RefSeq" id="WP_012660760.1">
    <property type="nucleotide sequence ID" value="NC_012039.1"/>
</dbReference>
<dbReference type="SMR" id="B9KE89"/>
<dbReference type="STRING" id="306263.Cla_0006"/>
<dbReference type="KEGG" id="cla:CLA_0006"/>
<dbReference type="PATRIC" id="fig|306263.5.peg.6"/>
<dbReference type="eggNOG" id="COG0780">
    <property type="taxonomic scope" value="Bacteria"/>
</dbReference>
<dbReference type="HOGENOM" id="CLU_102489_1_1_7"/>
<dbReference type="UniPathway" id="UPA00392"/>
<dbReference type="Proteomes" id="UP000007727">
    <property type="component" value="Chromosome"/>
</dbReference>
<dbReference type="GO" id="GO:0005737">
    <property type="term" value="C:cytoplasm"/>
    <property type="evidence" value="ECO:0007669"/>
    <property type="project" value="UniProtKB-SubCell"/>
</dbReference>
<dbReference type="GO" id="GO:0033739">
    <property type="term" value="F:preQ1 synthase activity"/>
    <property type="evidence" value="ECO:0007669"/>
    <property type="project" value="UniProtKB-UniRule"/>
</dbReference>
<dbReference type="GO" id="GO:0008616">
    <property type="term" value="P:queuosine biosynthetic process"/>
    <property type="evidence" value="ECO:0007669"/>
    <property type="project" value="UniProtKB-UniRule"/>
</dbReference>
<dbReference type="GO" id="GO:0006400">
    <property type="term" value="P:tRNA modification"/>
    <property type="evidence" value="ECO:0007669"/>
    <property type="project" value="UniProtKB-UniRule"/>
</dbReference>
<dbReference type="Gene3D" id="3.30.1130.10">
    <property type="match status" value="1"/>
</dbReference>
<dbReference type="HAMAP" id="MF_00818">
    <property type="entry name" value="QueF_type1"/>
    <property type="match status" value="1"/>
</dbReference>
<dbReference type="InterPro" id="IPR043133">
    <property type="entry name" value="GTP-CH-I_C/QueF"/>
</dbReference>
<dbReference type="InterPro" id="IPR050084">
    <property type="entry name" value="NADPH_dep_7-cyano-7-deazaG_red"/>
</dbReference>
<dbReference type="InterPro" id="IPR029500">
    <property type="entry name" value="QueF"/>
</dbReference>
<dbReference type="InterPro" id="IPR016856">
    <property type="entry name" value="QueF_type1"/>
</dbReference>
<dbReference type="NCBIfam" id="TIGR03139">
    <property type="entry name" value="QueF-II"/>
    <property type="match status" value="1"/>
</dbReference>
<dbReference type="PANTHER" id="PTHR34354">
    <property type="entry name" value="NADPH-DEPENDENT 7-CYANO-7-DEAZAGUANINE REDUCTASE"/>
    <property type="match status" value="1"/>
</dbReference>
<dbReference type="PANTHER" id="PTHR34354:SF1">
    <property type="entry name" value="NADPH-DEPENDENT 7-CYANO-7-DEAZAGUANINE REDUCTASE"/>
    <property type="match status" value="1"/>
</dbReference>
<dbReference type="Pfam" id="PF14489">
    <property type="entry name" value="QueF"/>
    <property type="match status" value="1"/>
</dbReference>
<dbReference type="PIRSF" id="PIRSF027377">
    <property type="entry name" value="Nitrile_oxidored_QueF"/>
    <property type="match status" value="1"/>
</dbReference>
<dbReference type="SUPFAM" id="SSF55620">
    <property type="entry name" value="Tetrahydrobiopterin biosynthesis enzymes-like"/>
    <property type="match status" value="1"/>
</dbReference>
<organism>
    <name type="scientific">Campylobacter lari (strain RM2100 / D67 / ATCC BAA-1060)</name>
    <dbReference type="NCBI Taxonomy" id="306263"/>
    <lineage>
        <taxon>Bacteria</taxon>
        <taxon>Pseudomonadati</taxon>
        <taxon>Campylobacterota</taxon>
        <taxon>Epsilonproteobacteria</taxon>
        <taxon>Campylobacterales</taxon>
        <taxon>Campylobacteraceae</taxon>
        <taxon>Campylobacter</taxon>
    </lineage>
</organism>
<protein>
    <recommendedName>
        <fullName evidence="1">NADPH-dependent 7-cyano-7-deazaguanine reductase</fullName>
        <ecNumber evidence="1">1.7.1.13</ecNumber>
    </recommendedName>
    <alternativeName>
        <fullName evidence="1">7-cyano-7-carbaguanine reductase</fullName>
    </alternativeName>
    <alternativeName>
        <fullName evidence="1">NADPH-dependent nitrile oxidoreductase</fullName>
    </alternativeName>
    <alternativeName>
        <fullName evidence="1">PreQ(0) reductase</fullName>
    </alternativeName>
</protein>
<keyword id="KW-0963">Cytoplasm</keyword>
<keyword id="KW-0521">NADP</keyword>
<keyword id="KW-0560">Oxidoreductase</keyword>
<keyword id="KW-0671">Queuosine biosynthesis</keyword>
<keyword id="KW-1185">Reference proteome</keyword>
<accession>B9KE89</accession>
<gene>
    <name evidence="1" type="primary">queF</name>
    <name type="ordered locus">Cla_0006</name>
</gene>
<evidence type="ECO:0000255" key="1">
    <source>
        <dbReference type="HAMAP-Rule" id="MF_00818"/>
    </source>
</evidence>